<keyword id="KW-0967">Endosome</keyword>
<keyword id="KW-0344">Guanine-nucleotide releasing factor</keyword>
<keyword id="KW-1185">Reference proteome</keyword>
<organism>
    <name type="scientific">Arabidopsis thaliana</name>
    <name type="common">Mouse-ear cress</name>
    <dbReference type="NCBI Taxonomy" id="3702"/>
    <lineage>
        <taxon>Eukaryota</taxon>
        <taxon>Viridiplantae</taxon>
        <taxon>Streptophyta</taxon>
        <taxon>Embryophyta</taxon>
        <taxon>Tracheophyta</taxon>
        <taxon>Spermatophyta</taxon>
        <taxon>Magnoliopsida</taxon>
        <taxon>eudicotyledons</taxon>
        <taxon>Gunneridae</taxon>
        <taxon>Pentapetalae</taxon>
        <taxon>rosids</taxon>
        <taxon>malvids</taxon>
        <taxon>Brassicales</taxon>
        <taxon>Brassicaceae</taxon>
        <taxon>Camelineae</taxon>
        <taxon>Arabidopsis</taxon>
    </lineage>
</organism>
<comment type="function">
    <text evidence="4">Plays an important role in membrane trafficking through the secretory apparatus. In complex with CCZ1, acts as a guanine exchange factor (GEF) for RABG3F of the Rab7 protein family. Promotes the exchange of GDP to GTP, converting RABG3F from an inactive GDP-bound form into an active GTP-bound form. The RABG3F active form is involved in protein trafficking from prevacuolar compartments (PVCs) to vacuoles. May serve as a linker between Rab5 and Rab7 protein families in PVCs and mediate PVC maturation.</text>
</comment>
<comment type="subunit">
    <text evidence="4">Interacts with CCZ1A, CCZ1B and RABF2B.</text>
</comment>
<comment type="subcellular location">
    <subcellularLocation>
        <location evidence="4">Endosome</location>
    </subcellularLocation>
    <subcellularLocation>
        <location evidence="4">Prevacuolar compartment</location>
    </subcellularLocation>
</comment>
<comment type="tissue specificity">
    <text evidence="3">Widely expressed at stable levels.</text>
</comment>
<comment type="disruption phenotype">
    <text evidence="2">Severe plant growth defects, such as short root phenotype, retarded growth and dwarf phenotype.</text>
</comment>
<comment type="miscellaneous">
    <text evidence="7">Due to the stability of its transcription during plant development, this gene is proposed as a reference gene for transcript normalization.</text>
</comment>
<comment type="similarity">
    <text evidence="6">Belongs to the MON1/SAND family.</text>
</comment>
<name>MON1_ARATH</name>
<gene>
    <name evidence="5" type="primary">MON1</name>
    <name evidence="8" type="ordered locus">At2g28390</name>
</gene>
<reference key="1">
    <citation type="journal article" date="1999" name="Nature">
        <title>Sequence and analysis of chromosome 2 of the plant Arabidopsis thaliana.</title>
        <authorList>
            <person name="Lin X."/>
            <person name="Kaul S."/>
            <person name="Rounsley S.D."/>
            <person name="Shea T.P."/>
            <person name="Benito M.-I."/>
            <person name="Town C.D."/>
            <person name="Fujii C.Y."/>
            <person name="Mason T.M."/>
            <person name="Bowman C.L."/>
            <person name="Barnstead M.E."/>
            <person name="Feldblyum T.V."/>
            <person name="Buell C.R."/>
            <person name="Ketchum K.A."/>
            <person name="Lee J.J."/>
            <person name="Ronning C.M."/>
            <person name="Koo H.L."/>
            <person name="Moffat K.S."/>
            <person name="Cronin L.A."/>
            <person name="Shen M."/>
            <person name="Pai G."/>
            <person name="Van Aken S."/>
            <person name="Umayam L."/>
            <person name="Tallon L.J."/>
            <person name="Gill J.E."/>
            <person name="Adams M.D."/>
            <person name="Carrera A.J."/>
            <person name="Creasy T.H."/>
            <person name="Goodman H.M."/>
            <person name="Somerville C.R."/>
            <person name="Copenhaver G.P."/>
            <person name="Preuss D."/>
            <person name="Nierman W.C."/>
            <person name="White O."/>
            <person name="Eisen J.A."/>
            <person name="Salzberg S.L."/>
            <person name="Fraser C.M."/>
            <person name="Venter J.C."/>
        </authorList>
    </citation>
    <scope>NUCLEOTIDE SEQUENCE [LARGE SCALE GENOMIC DNA]</scope>
    <source>
        <strain>cv. Columbia</strain>
    </source>
</reference>
<reference key="2">
    <citation type="journal article" date="2017" name="Plant J.">
        <title>Araport11: a complete reannotation of the Arabidopsis thaliana reference genome.</title>
        <authorList>
            <person name="Cheng C.Y."/>
            <person name="Krishnakumar V."/>
            <person name="Chan A.P."/>
            <person name="Thibaud-Nissen F."/>
            <person name="Schobel S."/>
            <person name="Town C.D."/>
        </authorList>
    </citation>
    <scope>GENOME REANNOTATION</scope>
    <source>
        <strain>cv. Columbia</strain>
    </source>
</reference>
<reference key="3">
    <citation type="journal article" date="2003" name="Science">
        <title>Empirical analysis of transcriptional activity in the Arabidopsis genome.</title>
        <authorList>
            <person name="Yamada K."/>
            <person name="Lim J."/>
            <person name="Dale J.M."/>
            <person name="Chen H."/>
            <person name="Shinn P."/>
            <person name="Palm C.J."/>
            <person name="Southwick A.M."/>
            <person name="Wu H.C."/>
            <person name="Kim C.J."/>
            <person name="Nguyen M."/>
            <person name="Pham P.K."/>
            <person name="Cheuk R.F."/>
            <person name="Karlin-Newmann G."/>
            <person name="Liu S.X."/>
            <person name="Lam B."/>
            <person name="Sakano H."/>
            <person name="Wu T."/>
            <person name="Yu G."/>
            <person name="Miranda M."/>
            <person name="Quach H.L."/>
            <person name="Tripp M."/>
            <person name="Chang C.H."/>
            <person name="Lee J.M."/>
            <person name="Toriumi M.J."/>
            <person name="Chan M.M."/>
            <person name="Tang C.C."/>
            <person name="Onodera C.S."/>
            <person name="Deng J.M."/>
            <person name="Akiyama K."/>
            <person name="Ansari Y."/>
            <person name="Arakawa T."/>
            <person name="Banh J."/>
            <person name="Banno F."/>
            <person name="Bowser L."/>
            <person name="Brooks S.Y."/>
            <person name="Carninci P."/>
            <person name="Chao Q."/>
            <person name="Choy N."/>
            <person name="Enju A."/>
            <person name="Goldsmith A.D."/>
            <person name="Gurjal M."/>
            <person name="Hansen N.F."/>
            <person name="Hayashizaki Y."/>
            <person name="Johnson-Hopson C."/>
            <person name="Hsuan V.W."/>
            <person name="Iida K."/>
            <person name="Karnes M."/>
            <person name="Khan S."/>
            <person name="Koesema E."/>
            <person name="Ishida J."/>
            <person name="Jiang P.X."/>
            <person name="Jones T."/>
            <person name="Kawai J."/>
            <person name="Kamiya A."/>
            <person name="Meyers C."/>
            <person name="Nakajima M."/>
            <person name="Narusaka M."/>
            <person name="Seki M."/>
            <person name="Sakurai T."/>
            <person name="Satou M."/>
            <person name="Tamse R."/>
            <person name="Vaysberg M."/>
            <person name="Wallender E.K."/>
            <person name="Wong C."/>
            <person name="Yamamura Y."/>
            <person name="Yuan S."/>
            <person name="Shinozaki K."/>
            <person name="Davis R.W."/>
            <person name="Theologis A."/>
            <person name="Ecker J.R."/>
        </authorList>
    </citation>
    <scope>NUCLEOTIDE SEQUENCE [LARGE SCALE MRNA]</scope>
    <source>
        <strain>cv. Columbia</strain>
    </source>
</reference>
<reference key="4">
    <citation type="submission" date="2005-03" db="EMBL/GenBank/DDBJ databases">
        <title>Large-scale analysis of RIKEN Arabidopsis full-length (RAFL) cDNAs.</title>
        <authorList>
            <person name="Totoki Y."/>
            <person name="Seki M."/>
            <person name="Ishida J."/>
            <person name="Nakajima M."/>
            <person name="Enju A."/>
            <person name="Kamiya A."/>
            <person name="Narusaka M."/>
            <person name="Shin-i T."/>
            <person name="Nakagawa M."/>
            <person name="Sakamoto N."/>
            <person name="Oishi K."/>
            <person name="Kohara Y."/>
            <person name="Kobayashi M."/>
            <person name="Toyoda A."/>
            <person name="Sakaki Y."/>
            <person name="Sakurai T."/>
            <person name="Iida K."/>
            <person name="Akiyama K."/>
            <person name="Satou M."/>
            <person name="Toyoda T."/>
            <person name="Konagaya A."/>
            <person name="Carninci P."/>
            <person name="Kawai J."/>
            <person name="Hayashizaki Y."/>
            <person name="Shinozaki K."/>
        </authorList>
    </citation>
    <scope>NUCLEOTIDE SEQUENCE [LARGE SCALE MRNA]</scope>
    <source>
        <strain>cv. Columbia</strain>
    </source>
</reference>
<reference key="5">
    <citation type="journal article" date="2005" name="Plant Physiol.">
        <title>Genome-wide identification and testing of superior reference genes for transcript normalization in Arabidopsis.</title>
        <authorList>
            <person name="Czechowski T."/>
            <person name="Stitt M."/>
            <person name="Altmann T."/>
            <person name="Udvardi M.K."/>
            <person name="Scheible W.R."/>
        </authorList>
    </citation>
    <scope>TISSUE SPECIFICITY</scope>
</reference>
<reference key="6">
    <citation type="journal article" date="2009" name="Plant Physiol.">
        <title>Large-scale Arabidopsis phosphoproteome profiling reveals novel chloroplast kinase substrates and phosphorylation networks.</title>
        <authorList>
            <person name="Reiland S."/>
            <person name="Messerli G."/>
            <person name="Baerenfaller K."/>
            <person name="Gerrits B."/>
            <person name="Endler A."/>
            <person name="Grossmann J."/>
            <person name="Gruissem W."/>
            <person name="Baginsky S."/>
        </authorList>
    </citation>
    <scope>IDENTIFICATION BY MASS SPECTROMETRY [LARGE SCALE ANALYSIS]</scope>
</reference>
<reference key="7">
    <citation type="journal article" date="2014" name="Plant Cell">
        <title>Activation of the Rab7 GTPase by the MON1-CCZ1 complex is essential for PVC-to-vacuole trafficking and plant growth in Arabidopsis.</title>
        <authorList>
            <person name="Cui Y."/>
            <person name="Zhao Q."/>
            <person name="Gao C."/>
            <person name="Ding Y."/>
            <person name="Zeng Y."/>
            <person name="Ueda T."/>
            <person name="Nakano A."/>
            <person name="Jiang L."/>
        </authorList>
    </citation>
    <scope>INTERACTION WITH CCZ1A; CCZ1B AND RABF2B</scope>
    <scope>SUBCELLULAR LOCATION</scope>
    <scope>DISRUPTION PHENOTYPE</scope>
</reference>
<accession>Q9SKN1</accession>
<accession>Q680T1</accession>
<accession>Q93ZL8</accession>
<dbReference type="EMBL" id="AC006283">
    <property type="protein sequence ID" value="AAD20687.2"/>
    <property type="molecule type" value="Genomic_DNA"/>
</dbReference>
<dbReference type="EMBL" id="CP002685">
    <property type="protein sequence ID" value="AEC08115.1"/>
    <property type="molecule type" value="Genomic_DNA"/>
</dbReference>
<dbReference type="EMBL" id="AY056801">
    <property type="protein sequence ID" value="AAL10492.1"/>
    <property type="molecule type" value="mRNA"/>
</dbReference>
<dbReference type="EMBL" id="AY133524">
    <property type="protein sequence ID" value="AAM91354.1"/>
    <property type="molecule type" value="mRNA"/>
</dbReference>
<dbReference type="EMBL" id="AK118037">
    <property type="protein sequence ID" value="BAC42668.1"/>
    <property type="molecule type" value="mRNA"/>
</dbReference>
<dbReference type="EMBL" id="AK175575">
    <property type="protein sequence ID" value="BAD43338.1"/>
    <property type="molecule type" value="mRNA"/>
</dbReference>
<dbReference type="EMBL" id="AK175699">
    <property type="protein sequence ID" value="BAD43462.1"/>
    <property type="molecule type" value="mRNA"/>
</dbReference>
<dbReference type="EMBL" id="AK175786">
    <property type="protein sequence ID" value="BAD43549.1"/>
    <property type="molecule type" value="mRNA"/>
</dbReference>
<dbReference type="EMBL" id="AK176064">
    <property type="protein sequence ID" value="BAD43827.1"/>
    <property type="molecule type" value="mRNA"/>
</dbReference>
<dbReference type="EMBL" id="AK176154">
    <property type="protein sequence ID" value="BAD43917.1"/>
    <property type="molecule type" value="mRNA"/>
</dbReference>
<dbReference type="EMBL" id="AK221211">
    <property type="protein sequence ID" value="BAD93763.1"/>
    <property type="molecule type" value="mRNA"/>
</dbReference>
<dbReference type="PIR" id="C84684">
    <property type="entry name" value="C84684"/>
</dbReference>
<dbReference type="RefSeq" id="NP_029426.1">
    <property type="nucleotide sequence ID" value="NM_128399.4"/>
</dbReference>
<dbReference type="SMR" id="Q9SKN1"/>
<dbReference type="FunCoup" id="Q9SKN1">
    <property type="interactions" value="4489"/>
</dbReference>
<dbReference type="STRING" id="3702.Q9SKN1"/>
<dbReference type="GlyGen" id="Q9SKN1">
    <property type="glycosylation" value="1 site"/>
</dbReference>
<dbReference type="iPTMnet" id="Q9SKN1"/>
<dbReference type="PaxDb" id="3702-AT2G28390.1"/>
<dbReference type="ProteomicsDB" id="250879"/>
<dbReference type="EnsemblPlants" id="AT2G28390.1">
    <property type="protein sequence ID" value="AT2G28390.1"/>
    <property type="gene ID" value="AT2G28390"/>
</dbReference>
<dbReference type="GeneID" id="817387"/>
<dbReference type="Gramene" id="AT2G28390.1">
    <property type="protein sequence ID" value="AT2G28390.1"/>
    <property type="gene ID" value="AT2G28390"/>
</dbReference>
<dbReference type="KEGG" id="ath:AT2G28390"/>
<dbReference type="Araport" id="AT2G28390"/>
<dbReference type="TAIR" id="AT2G28390">
    <property type="gene designation" value="MON1"/>
</dbReference>
<dbReference type="eggNOG" id="KOG0997">
    <property type="taxonomic scope" value="Eukaryota"/>
</dbReference>
<dbReference type="HOGENOM" id="CLU_014574_3_1_1"/>
<dbReference type="InParanoid" id="Q9SKN1"/>
<dbReference type="OMA" id="TKTCAIT"/>
<dbReference type="PhylomeDB" id="Q9SKN1"/>
<dbReference type="PRO" id="PR:Q9SKN1"/>
<dbReference type="Proteomes" id="UP000006548">
    <property type="component" value="Chromosome 2"/>
</dbReference>
<dbReference type="ExpressionAtlas" id="Q9SKN1">
    <property type="expression patterns" value="baseline and differential"/>
</dbReference>
<dbReference type="GO" id="GO:0005768">
    <property type="term" value="C:endosome"/>
    <property type="evidence" value="ECO:0000314"/>
    <property type="project" value="UniProtKB"/>
</dbReference>
<dbReference type="GO" id="GO:0005085">
    <property type="term" value="F:guanyl-nucleotide exchange factor activity"/>
    <property type="evidence" value="ECO:0007669"/>
    <property type="project" value="UniProtKB-KW"/>
</dbReference>
<dbReference type="GO" id="GO:0006886">
    <property type="term" value="P:intracellular protein transport"/>
    <property type="evidence" value="ECO:0000315"/>
    <property type="project" value="UniProtKB"/>
</dbReference>
<dbReference type="GO" id="GO:0045324">
    <property type="term" value="P:late endosome to vacuole transport"/>
    <property type="evidence" value="ECO:0000315"/>
    <property type="project" value="UniProtKB"/>
</dbReference>
<dbReference type="GO" id="GO:0099402">
    <property type="term" value="P:plant organ development"/>
    <property type="evidence" value="ECO:0000315"/>
    <property type="project" value="UniProtKB"/>
</dbReference>
<dbReference type="GO" id="GO:0006623">
    <property type="term" value="P:protein targeting to vacuole"/>
    <property type="evidence" value="ECO:0007669"/>
    <property type="project" value="InterPro"/>
</dbReference>
<dbReference type="GO" id="GO:0007033">
    <property type="term" value="P:vacuole organization"/>
    <property type="evidence" value="ECO:0000315"/>
    <property type="project" value="UniProtKB"/>
</dbReference>
<dbReference type="InterPro" id="IPR043972">
    <property type="entry name" value="FUZ/MON1/HPS1_longin_1"/>
</dbReference>
<dbReference type="InterPro" id="IPR043971">
    <property type="entry name" value="FUZ/MON1/HPS1_longin_2"/>
</dbReference>
<dbReference type="InterPro" id="IPR043970">
    <property type="entry name" value="FUZ/MON1/HPS1_longin_3"/>
</dbReference>
<dbReference type="InterPro" id="IPR004353">
    <property type="entry name" value="Mon1"/>
</dbReference>
<dbReference type="PANTHER" id="PTHR13027">
    <property type="entry name" value="SAND PROTEIN-RELATED"/>
    <property type="match status" value="1"/>
</dbReference>
<dbReference type="PANTHER" id="PTHR13027:SF7">
    <property type="entry name" value="VACUOLAR FUSION PROTEIN MON1 HOMOLOG"/>
    <property type="match status" value="1"/>
</dbReference>
<dbReference type="Pfam" id="PF19036">
    <property type="entry name" value="Fuz_longin_1"/>
    <property type="match status" value="1"/>
</dbReference>
<dbReference type="Pfam" id="PF19037">
    <property type="entry name" value="Fuz_longin_2"/>
    <property type="match status" value="1"/>
</dbReference>
<dbReference type="Pfam" id="PF19038">
    <property type="entry name" value="Fuz_longin_3"/>
    <property type="match status" value="1"/>
</dbReference>
<dbReference type="PRINTS" id="PR01546">
    <property type="entry name" value="YEAST73DUF"/>
</dbReference>
<feature type="chain" id="PRO_0000438479" description="Vacuolar fusion protein MON1 homolog">
    <location>
        <begin position="1"/>
        <end position="607"/>
    </location>
</feature>
<feature type="region of interest" description="Disordered" evidence="1">
    <location>
        <begin position="1"/>
        <end position="173"/>
    </location>
</feature>
<feature type="region of interest" description="Disordered" evidence="1">
    <location>
        <begin position="463"/>
        <end position="486"/>
    </location>
</feature>
<feature type="compositionally biased region" description="Low complexity" evidence="1">
    <location>
        <begin position="1"/>
        <end position="14"/>
    </location>
</feature>
<feature type="compositionally biased region" description="Polar residues" evidence="1">
    <location>
        <begin position="21"/>
        <end position="55"/>
    </location>
</feature>
<feature type="sequence conflict" description="In Ref. 4; BAD43549." evidence="6" ref="4">
    <original>A</original>
    <variation>V</variation>
    <location>
        <position position="528"/>
    </location>
</feature>
<evidence type="ECO:0000256" key="1">
    <source>
        <dbReference type="SAM" id="MobiDB-lite"/>
    </source>
</evidence>
<evidence type="ECO:0000269" key="2">
    <source>
    </source>
</evidence>
<evidence type="ECO:0000269" key="3">
    <source>
    </source>
</evidence>
<evidence type="ECO:0000269" key="4">
    <source>
    </source>
</evidence>
<evidence type="ECO:0000303" key="5">
    <source>
    </source>
</evidence>
<evidence type="ECO:0000305" key="6"/>
<evidence type="ECO:0000305" key="7">
    <source>
    </source>
</evidence>
<evidence type="ECO:0000312" key="8">
    <source>
        <dbReference type="Araport" id="AT2G28390"/>
    </source>
</evidence>
<proteinExistence type="evidence at protein level"/>
<protein>
    <recommendedName>
        <fullName evidence="6">Vacuolar fusion protein MON1 homolog</fullName>
    </recommendedName>
</protein>
<sequence>MATSDSRSSPSSSDTEFADPNPSSDPETNSERVQSQLESMNLSQPSEVSDGSHTEFSGGGDDNDDEVASANGNEGGVSNGGLLREGVAGTSGGEVLLRAENPVEMEAGEEPPSPTSSGYDGERGSSGGATSTYKADDGSEDEIREANVDGDTASQHEAAWLPGKRHVDEDDASTSWRKRKKHFFILSNSGKPIYSRYGDEHKLAGFSATLQAIISFVENGGDRVNLVKAGNHQVVFLVKGPIYLVCISCTDETYEYLRGQLDLLYGQMILILTKSIDRCFEKNAKFDMTPLLGGTDAVFSSLVHSFSWNPATFLHAYTCLPLPYALRQATGTILQEVCASGVLFSLLMCRHKVVSLAGAQKASLHPDDLLLLSNFVMSSESFRTSESFSPICLPRYNAQAFLHAYVHFFDDDTYVILLTTRSDAFHHLKDCRVRLEAVLLKSNILSVVQRSIAEGGMRVEDVPIDRRRRSSTTNQEQDSPGPDISVGTGGPFGLWHFMYRSIYLDQYISSEFSPPVTSHRQQKSLYRAYQKLYASMHVKGLGPHKTQYRRDENYTLLCWVTPDFELYAAFDPLADKAMAIKICNQVCQRVKDVENEVFLQGASPFSW</sequence>